<feature type="chain" id="PRO_0000408285" description="1-aminocyclopropane-1-carboxylate oxidase homolog 10">
    <location>
        <begin position="1"/>
        <end position="362"/>
    </location>
</feature>
<feature type="domain" description="Fe2OG dioxygenase" evidence="1">
    <location>
        <begin position="211"/>
        <end position="310"/>
    </location>
</feature>
<feature type="binding site" evidence="1">
    <location>
        <position position="235"/>
    </location>
    <ligand>
        <name>Fe cation</name>
        <dbReference type="ChEBI" id="CHEBI:24875"/>
    </ligand>
</feature>
<feature type="binding site" evidence="1">
    <location>
        <position position="237"/>
    </location>
    <ligand>
        <name>Fe cation</name>
        <dbReference type="ChEBI" id="CHEBI:24875"/>
    </ligand>
</feature>
<feature type="binding site" evidence="1">
    <location>
        <position position="291"/>
    </location>
    <ligand>
        <name>Fe cation</name>
        <dbReference type="ChEBI" id="CHEBI:24875"/>
    </ligand>
</feature>
<feature type="binding site" evidence="1">
    <location>
        <position position="301"/>
    </location>
    <ligand>
        <name>2-oxoglutarate</name>
        <dbReference type="ChEBI" id="CHEBI:16810"/>
    </ligand>
</feature>
<feature type="sequence conflict" description="In Ref. 3; AAK68810." evidence="4" ref="3">
    <original>V</original>
    <variation>A</variation>
    <location>
        <position position="175"/>
    </location>
</feature>
<feature type="sequence conflict" description="In Ref. 3; AAK68810." evidence="4" ref="3">
    <original>T</original>
    <variation>A</variation>
    <location>
        <position position="203"/>
    </location>
</feature>
<protein>
    <recommendedName>
        <fullName>1-aminocyclopropane-1-carboxylate oxidase homolog 10</fullName>
        <ecNumber>1.14.-.-</ecNumber>
    </recommendedName>
</protein>
<gene>
    <name type="ordered locus">At5g43450</name>
    <name type="ORF">MWF20.16</name>
</gene>
<comment type="cofactor">
    <cofactor evidence="1">
        <name>Fe(2+)</name>
        <dbReference type="ChEBI" id="CHEBI:29033"/>
    </cofactor>
    <text evidence="1">Binds 1 Fe(2+) ion per subunit.</text>
</comment>
<comment type="induction">
    <text evidence="2 3">By ethylene. Slightly induced in leaf blades in low light intensities.</text>
</comment>
<comment type="similarity">
    <text evidence="4">Belongs to the iron/ascorbate-dependent oxidoreductase family.</text>
</comment>
<organism>
    <name type="scientific">Arabidopsis thaliana</name>
    <name type="common">Mouse-ear cress</name>
    <dbReference type="NCBI Taxonomy" id="3702"/>
    <lineage>
        <taxon>Eukaryota</taxon>
        <taxon>Viridiplantae</taxon>
        <taxon>Streptophyta</taxon>
        <taxon>Embryophyta</taxon>
        <taxon>Tracheophyta</taxon>
        <taxon>Spermatophyta</taxon>
        <taxon>Magnoliopsida</taxon>
        <taxon>eudicotyledons</taxon>
        <taxon>Gunneridae</taxon>
        <taxon>Pentapetalae</taxon>
        <taxon>rosids</taxon>
        <taxon>malvids</taxon>
        <taxon>Brassicales</taxon>
        <taxon>Brassicaceae</taxon>
        <taxon>Camelineae</taxon>
        <taxon>Arabidopsis</taxon>
    </lineage>
</organism>
<evidence type="ECO:0000255" key="1">
    <source>
        <dbReference type="PROSITE-ProRule" id="PRU00805"/>
    </source>
</evidence>
<evidence type="ECO:0000269" key="2">
    <source>
    </source>
</evidence>
<evidence type="ECO:0000269" key="3">
    <source>
    </source>
</evidence>
<evidence type="ECO:0000305" key="4"/>
<name>ACH10_ARATH</name>
<sequence>MTENSEKIDRLNDLTTFISTKTGVKGLVDAEITEVPSMFHVPSSILSNNRPSDISGLNLTVPIIDLGDRNTSSRNVVISKIKDAAENWGFFQVINHDVPLTVLEEIKESVRRFHEQDPVVKNQYLPTDNNKRFVYNNDFDLYHSSPLNWRDSFTCYIAPDPPNPEEIPLACRSAVIEYTKHVMELGAVLFQLLSEALGLDSETLKRIDCLKGLFMLCHYYPPCPQPDLTLGISKHTDNSFLTLLLQDQIGGLQVLHEDYWVDVPPVPGALVVNIGDFMQLITNDKFLSVEHRVRPNKDRPRISVACFFSSSLSPNSTVYGPIKDLLSDENPAKYKDITIPEYTAGFLASIFDEKSYLTNYMI</sequence>
<reference key="1">
    <citation type="journal article" date="2000" name="DNA Res.">
        <title>Structural analysis of Arabidopsis thaliana chromosome 5. X. Sequence features of the regions of 3,076,755 bp covered by sixty P1 and TAC clones.</title>
        <authorList>
            <person name="Sato S."/>
            <person name="Nakamura Y."/>
            <person name="Kaneko T."/>
            <person name="Katoh T."/>
            <person name="Asamizu E."/>
            <person name="Kotani H."/>
            <person name="Tabata S."/>
        </authorList>
    </citation>
    <scope>NUCLEOTIDE SEQUENCE [LARGE SCALE GENOMIC DNA]</scope>
    <source>
        <strain>cv. Columbia</strain>
    </source>
</reference>
<reference key="2">
    <citation type="journal article" date="2017" name="Plant J.">
        <title>Araport11: a complete reannotation of the Arabidopsis thaliana reference genome.</title>
        <authorList>
            <person name="Cheng C.Y."/>
            <person name="Krishnakumar V."/>
            <person name="Chan A.P."/>
            <person name="Thibaud-Nissen F."/>
            <person name="Schobel S."/>
            <person name="Town C.D."/>
        </authorList>
    </citation>
    <scope>GENOME REANNOTATION</scope>
    <source>
        <strain>cv. Columbia</strain>
    </source>
</reference>
<reference key="3">
    <citation type="journal article" date="2003" name="Science">
        <title>Empirical analysis of transcriptional activity in the Arabidopsis genome.</title>
        <authorList>
            <person name="Yamada K."/>
            <person name="Lim J."/>
            <person name="Dale J.M."/>
            <person name="Chen H."/>
            <person name="Shinn P."/>
            <person name="Palm C.J."/>
            <person name="Southwick A.M."/>
            <person name="Wu H.C."/>
            <person name="Kim C.J."/>
            <person name="Nguyen M."/>
            <person name="Pham P.K."/>
            <person name="Cheuk R.F."/>
            <person name="Karlin-Newmann G."/>
            <person name="Liu S.X."/>
            <person name="Lam B."/>
            <person name="Sakano H."/>
            <person name="Wu T."/>
            <person name="Yu G."/>
            <person name="Miranda M."/>
            <person name="Quach H.L."/>
            <person name="Tripp M."/>
            <person name="Chang C.H."/>
            <person name="Lee J.M."/>
            <person name="Toriumi M.J."/>
            <person name="Chan M.M."/>
            <person name="Tang C.C."/>
            <person name="Onodera C.S."/>
            <person name="Deng J.M."/>
            <person name="Akiyama K."/>
            <person name="Ansari Y."/>
            <person name="Arakawa T."/>
            <person name="Banh J."/>
            <person name="Banno F."/>
            <person name="Bowser L."/>
            <person name="Brooks S.Y."/>
            <person name="Carninci P."/>
            <person name="Chao Q."/>
            <person name="Choy N."/>
            <person name="Enju A."/>
            <person name="Goldsmith A.D."/>
            <person name="Gurjal M."/>
            <person name="Hansen N.F."/>
            <person name="Hayashizaki Y."/>
            <person name="Johnson-Hopson C."/>
            <person name="Hsuan V.W."/>
            <person name="Iida K."/>
            <person name="Karnes M."/>
            <person name="Khan S."/>
            <person name="Koesema E."/>
            <person name="Ishida J."/>
            <person name="Jiang P.X."/>
            <person name="Jones T."/>
            <person name="Kawai J."/>
            <person name="Kamiya A."/>
            <person name="Meyers C."/>
            <person name="Nakajima M."/>
            <person name="Narusaka M."/>
            <person name="Seki M."/>
            <person name="Sakurai T."/>
            <person name="Satou M."/>
            <person name="Tamse R."/>
            <person name="Vaysberg M."/>
            <person name="Wallender E.K."/>
            <person name="Wong C."/>
            <person name="Yamamura Y."/>
            <person name="Yuan S."/>
            <person name="Shinozaki K."/>
            <person name="Davis R.W."/>
            <person name="Theologis A."/>
            <person name="Ecker J.R."/>
        </authorList>
    </citation>
    <scope>NUCLEOTIDE SEQUENCE [LARGE SCALE MRNA]</scope>
    <source>
        <strain>cv. Columbia</strain>
    </source>
</reference>
<reference key="4">
    <citation type="submission" date="2004-07" db="EMBL/GenBank/DDBJ databases">
        <title>Arabidopsis ORF clones.</title>
        <authorList>
            <person name="Kim C.J."/>
            <person name="Chen H."/>
            <person name="Cheuk R.F."/>
            <person name="Shinn P."/>
            <person name="Ecker J.R."/>
        </authorList>
    </citation>
    <scope>NUCLEOTIDE SEQUENCE [LARGE SCALE MRNA]</scope>
    <source>
        <strain>cv. Columbia</strain>
    </source>
</reference>
<reference key="5">
    <citation type="journal article" date="2003" name="Plant Physiol.">
        <title>Ethylene and auxin control the Arabidopsis response to decreased light intensity.</title>
        <authorList>
            <person name="Vandenbussche F."/>
            <person name="Vriezen W.H."/>
            <person name="Smalle J."/>
            <person name="Laarhoven L.J.J."/>
            <person name="Harren F.J.M."/>
            <person name="Van Der Straeten D."/>
        </authorList>
    </citation>
    <scope>INDUCTION BY LOW LIGHT</scope>
</reference>
<reference key="6">
    <citation type="journal article" date="2004" name="Plant J.">
        <title>Transcriptional profiling by cDNA-AFLP and microarray analysis reveals novel insights into the early response to ethylene in Arabidopsis.</title>
        <authorList>
            <person name="De Paepe A."/>
            <person name="Vuylsteke M."/>
            <person name="Van Hummelen P."/>
            <person name="Zabeau M."/>
            <person name="Van Der Straeten D."/>
        </authorList>
    </citation>
    <scope>INDUCTION BY ETHYLENE</scope>
    <source>
        <strain>cv. Columbia</strain>
    </source>
</reference>
<proteinExistence type="evidence at transcript level"/>
<keyword id="KW-0408">Iron</keyword>
<keyword id="KW-0479">Metal-binding</keyword>
<keyword id="KW-0560">Oxidoreductase</keyword>
<keyword id="KW-1185">Reference proteome</keyword>
<accession>Q9LSW6</accession>
<accession>Q94B41</accession>
<dbReference type="EC" id="1.14.-.-"/>
<dbReference type="EMBL" id="AB025638">
    <property type="protein sequence ID" value="BAA97424.1"/>
    <property type="molecule type" value="Genomic_DNA"/>
</dbReference>
<dbReference type="EMBL" id="CP002688">
    <property type="protein sequence ID" value="AED94965.1"/>
    <property type="molecule type" value="Genomic_DNA"/>
</dbReference>
<dbReference type="EMBL" id="AY042870">
    <property type="protein sequence ID" value="AAK68810.1"/>
    <property type="molecule type" value="mRNA"/>
</dbReference>
<dbReference type="EMBL" id="BT015042">
    <property type="protein sequence ID" value="AAT70493.1"/>
    <property type="molecule type" value="mRNA"/>
</dbReference>
<dbReference type="RefSeq" id="NP_199158.1">
    <property type="nucleotide sequence ID" value="NM_123711.4"/>
</dbReference>
<dbReference type="SMR" id="Q9LSW6"/>
<dbReference type="FunCoup" id="Q9LSW6">
    <property type="interactions" value="1"/>
</dbReference>
<dbReference type="STRING" id="3702.Q9LSW6"/>
<dbReference type="PaxDb" id="3702-AT5G43450.1"/>
<dbReference type="ProteomicsDB" id="244349"/>
<dbReference type="EnsemblPlants" id="AT5G43450.1">
    <property type="protein sequence ID" value="AT5G43450.1"/>
    <property type="gene ID" value="AT5G43450"/>
</dbReference>
<dbReference type="GeneID" id="834365"/>
<dbReference type="Gramene" id="AT5G43450.1">
    <property type="protein sequence ID" value="AT5G43450.1"/>
    <property type="gene ID" value="AT5G43450"/>
</dbReference>
<dbReference type="KEGG" id="ath:AT5G43450"/>
<dbReference type="Araport" id="AT5G43450"/>
<dbReference type="TAIR" id="AT5G43450"/>
<dbReference type="eggNOG" id="KOG0143">
    <property type="taxonomic scope" value="Eukaryota"/>
</dbReference>
<dbReference type="HOGENOM" id="CLU_010119_0_0_1"/>
<dbReference type="InParanoid" id="Q9LSW6"/>
<dbReference type="OMA" id="KFFYNAS"/>
<dbReference type="PhylomeDB" id="Q9LSW6"/>
<dbReference type="BioCyc" id="ARA:AT5G43450-MONOMER"/>
<dbReference type="PRO" id="PR:Q9LSW6"/>
<dbReference type="Proteomes" id="UP000006548">
    <property type="component" value="Chromosome 5"/>
</dbReference>
<dbReference type="ExpressionAtlas" id="Q9LSW6">
    <property type="expression patterns" value="baseline and differential"/>
</dbReference>
<dbReference type="GO" id="GO:0009815">
    <property type="term" value="F:1-aminocyclopropane-1-carboxylate oxidase activity"/>
    <property type="evidence" value="ECO:0000250"/>
    <property type="project" value="TAIR"/>
</dbReference>
<dbReference type="GO" id="GO:0051213">
    <property type="term" value="F:dioxygenase activity"/>
    <property type="evidence" value="ECO:0007669"/>
    <property type="project" value="UniProtKB-ARBA"/>
</dbReference>
<dbReference type="GO" id="GO:0046872">
    <property type="term" value="F:metal ion binding"/>
    <property type="evidence" value="ECO:0007669"/>
    <property type="project" value="UniProtKB-KW"/>
</dbReference>
<dbReference type="GO" id="GO:0009058">
    <property type="term" value="P:biosynthetic process"/>
    <property type="evidence" value="ECO:0007669"/>
    <property type="project" value="UniProtKB-ARBA"/>
</dbReference>
<dbReference type="FunFam" id="2.60.120.330:FF:000005">
    <property type="entry name" value="1-aminocyclopropane-1-carboxylate oxidase homolog 1"/>
    <property type="match status" value="1"/>
</dbReference>
<dbReference type="Gene3D" id="2.60.120.330">
    <property type="entry name" value="B-lactam Antibiotic, Isopenicillin N Synthase, Chain"/>
    <property type="match status" value="1"/>
</dbReference>
<dbReference type="InterPro" id="IPR026992">
    <property type="entry name" value="DIOX_N"/>
</dbReference>
<dbReference type="InterPro" id="IPR044861">
    <property type="entry name" value="IPNS-like_FE2OG_OXY"/>
</dbReference>
<dbReference type="InterPro" id="IPR027443">
    <property type="entry name" value="IPNS-like_sf"/>
</dbReference>
<dbReference type="InterPro" id="IPR005123">
    <property type="entry name" value="Oxoglu/Fe-dep_dioxygenase_dom"/>
</dbReference>
<dbReference type="PANTHER" id="PTHR10209:SF473">
    <property type="entry name" value="1-AMINOCYCLOPROPANE-1-CARBOXYLATE OXIDASE HOMOLOG 10-RELATED"/>
    <property type="match status" value="1"/>
</dbReference>
<dbReference type="PANTHER" id="PTHR10209">
    <property type="entry name" value="OXIDOREDUCTASE, 2OG-FE II OXYGENASE FAMILY PROTEIN"/>
    <property type="match status" value="1"/>
</dbReference>
<dbReference type="Pfam" id="PF03171">
    <property type="entry name" value="2OG-FeII_Oxy"/>
    <property type="match status" value="1"/>
</dbReference>
<dbReference type="Pfam" id="PF14226">
    <property type="entry name" value="DIOX_N"/>
    <property type="match status" value="1"/>
</dbReference>
<dbReference type="SUPFAM" id="SSF51197">
    <property type="entry name" value="Clavaminate synthase-like"/>
    <property type="match status" value="1"/>
</dbReference>
<dbReference type="PROSITE" id="PS51471">
    <property type="entry name" value="FE2OG_OXY"/>
    <property type="match status" value="1"/>
</dbReference>